<accession>Q9FZ24</accession>
<accession>Q8VYY9</accession>
<keyword id="KW-0496">Mitochondrion</keyword>
<keyword id="KW-1185">Reference proteome</keyword>
<keyword id="KW-0677">Repeat</keyword>
<keyword id="KW-0809">Transit peptide</keyword>
<feature type="transit peptide" description="Mitochondrion" evidence="1">
    <location>
        <begin position="1"/>
        <end position="18"/>
    </location>
</feature>
<feature type="chain" id="PRO_0000342745" description="Pentatricopeptide repeat-containing protein At1g02370, mitochondrial">
    <location>
        <begin position="19"/>
        <end position="537"/>
    </location>
</feature>
<feature type="repeat" description="PPR 1">
    <location>
        <begin position="171"/>
        <end position="205"/>
    </location>
</feature>
<feature type="repeat" description="PPR 2">
    <location>
        <begin position="206"/>
        <end position="240"/>
    </location>
</feature>
<feature type="repeat" description="PPR 3">
    <location>
        <begin position="241"/>
        <end position="275"/>
    </location>
</feature>
<feature type="repeat" description="PPR 4">
    <location>
        <begin position="277"/>
        <end position="307"/>
    </location>
</feature>
<feature type="repeat" description="PPR 5">
    <location>
        <begin position="312"/>
        <end position="346"/>
    </location>
</feature>
<feature type="repeat" description="PPR 6">
    <location>
        <begin position="347"/>
        <end position="377"/>
    </location>
</feature>
<feature type="repeat" description="PPR 7">
    <location>
        <begin position="382"/>
        <end position="416"/>
    </location>
</feature>
<feature type="sequence conflict" description="In Ref. 3; AAL38889." evidence="2" ref="3">
    <original>M</original>
    <variation>I</variation>
    <location>
        <position position="233"/>
    </location>
</feature>
<comment type="subcellular location">
    <subcellularLocation>
        <location evidence="2">Mitochondrion</location>
    </subcellularLocation>
</comment>
<comment type="similarity">
    <text evidence="2">Belongs to the PPR family. P subfamily.</text>
</comment>
<comment type="online information" name="Pentatricopeptide repeat proteins">
    <link uri="https://ppr.plantenergy.uwa.edu.au"/>
</comment>
<reference key="1">
    <citation type="journal article" date="2000" name="Nature">
        <title>Sequence and analysis of chromosome 1 of the plant Arabidopsis thaliana.</title>
        <authorList>
            <person name="Theologis A."/>
            <person name="Ecker J.R."/>
            <person name="Palm C.J."/>
            <person name="Federspiel N.A."/>
            <person name="Kaul S."/>
            <person name="White O."/>
            <person name="Alonso J."/>
            <person name="Altafi H."/>
            <person name="Araujo R."/>
            <person name="Bowman C.L."/>
            <person name="Brooks S.Y."/>
            <person name="Buehler E."/>
            <person name="Chan A."/>
            <person name="Chao Q."/>
            <person name="Chen H."/>
            <person name="Cheuk R.F."/>
            <person name="Chin C.W."/>
            <person name="Chung M.K."/>
            <person name="Conn L."/>
            <person name="Conway A.B."/>
            <person name="Conway A.R."/>
            <person name="Creasy T.H."/>
            <person name="Dewar K."/>
            <person name="Dunn P."/>
            <person name="Etgu P."/>
            <person name="Feldblyum T.V."/>
            <person name="Feng J.-D."/>
            <person name="Fong B."/>
            <person name="Fujii C.Y."/>
            <person name="Gill J.E."/>
            <person name="Goldsmith A.D."/>
            <person name="Haas B."/>
            <person name="Hansen N.F."/>
            <person name="Hughes B."/>
            <person name="Huizar L."/>
            <person name="Hunter J.L."/>
            <person name="Jenkins J."/>
            <person name="Johnson-Hopson C."/>
            <person name="Khan S."/>
            <person name="Khaykin E."/>
            <person name="Kim C.J."/>
            <person name="Koo H.L."/>
            <person name="Kremenetskaia I."/>
            <person name="Kurtz D.B."/>
            <person name="Kwan A."/>
            <person name="Lam B."/>
            <person name="Langin-Hooper S."/>
            <person name="Lee A."/>
            <person name="Lee J.M."/>
            <person name="Lenz C.A."/>
            <person name="Li J.H."/>
            <person name="Li Y.-P."/>
            <person name="Lin X."/>
            <person name="Liu S.X."/>
            <person name="Liu Z.A."/>
            <person name="Luros J.S."/>
            <person name="Maiti R."/>
            <person name="Marziali A."/>
            <person name="Militscher J."/>
            <person name="Miranda M."/>
            <person name="Nguyen M."/>
            <person name="Nierman W.C."/>
            <person name="Osborne B.I."/>
            <person name="Pai G."/>
            <person name="Peterson J."/>
            <person name="Pham P.K."/>
            <person name="Rizzo M."/>
            <person name="Rooney T."/>
            <person name="Rowley D."/>
            <person name="Sakano H."/>
            <person name="Salzberg S.L."/>
            <person name="Schwartz J.R."/>
            <person name="Shinn P."/>
            <person name="Southwick A.M."/>
            <person name="Sun H."/>
            <person name="Tallon L.J."/>
            <person name="Tambunga G."/>
            <person name="Toriumi M.J."/>
            <person name="Town C.D."/>
            <person name="Utterback T."/>
            <person name="Van Aken S."/>
            <person name="Vaysberg M."/>
            <person name="Vysotskaia V.S."/>
            <person name="Walker M."/>
            <person name="Wu D."/>
            <person name="Yu G."/>
            <person name="Fraser C.M."/>
            <person name="Venter J.C."/>
            <person name="Davis R.W."/>
        </authorList>
    </citation>
    <scope>NUCLEOTIDE SEQUENCE [LARGE SCALE GENOMIC DNA]</scope>
    <source>
        <strain>cv. Columbia</strain>
    </source>
</reference>
<reference key="2">
    <citation type="journal article" date="2017" name="Plant J.">
        <title>Araport11: a complete reannotation of the Arabidopsis thaliana reference genome.</title>
        <authorList>
            <person name="Cheng C.Y."/>
            <person name="Krishnakumar V."/>
            <person name="Chan A.P."/>
            <person name="Thibaud-Nissen F."/>
            <person name="Schobel S."/>
            <person name="Town C.D."/>
        </authorList>
    </citation>
    <scope>GENOME REANNOTATION</scope>
    <source>
        <strain>cv. Columbia</strain>
    </source>
</reference>
<reference key="3">
    <citation type="journal article" date="2003" name="Science">
        <title>Empirical analysis of transcriptional activity in the Arabidopsis genome.</title>
        <authorList>
            <person name="Yamada K."/>
            <person name="Lim J."/>
            <person name="Dale J.M."/>
            <person name="Chen H."/>
            <person name="Shinn P."/>
            <person name="Palm C.J."/>
            <person name="Southwick A.M."/>
            <person name="Wu H.C."/>
            <person name="Kim C.J."/>
            <person name="Nguyen M."/>
            <person name="Pham P.K."/>
            <person name="Cheuk R.F."/>
            <person name="Karlin-Newmann G."/>
            <person name="Liu S.X."/>
            <person name="Lam B."/>
            <person name="Sakano H."/>
            <person name="Wu T."/>
            <person name="Yu G."/>
            <person name="Miranda M."/>
            <person name="Quach H.L."/>
            <person name="Tripp M."/>
            <person name="Chang C.H."/>
            <person name="Lee J.M."/>
            <person name="Toriumi M.J."/>
            <person name="Chan M.M."/>
            <person name="Tang C.C."/>
            <person name="Onodera C.S."/>
            <person name="Deng J.M."/>
            <person name="Akiyama K."/>
            <person name="Ansari Y."/>
            <person name="Arakawa T."/>
            <person name="Banh J."/>
            <person name="Banno F."/>
            <person name="Bowser L."/>
            <person name="Brooks S.Y."/>
            <person name="Carninci P."/>
            <person name="Chao Q."/>
            <person name="Choy N."/>
            <person name="Enju A."/>
            <person name="Goldsmith A.D."/>
            <person name="Gurjal M."/>
            <person name="Hansen N.F."/>
            <person name="Hayashizaki Y."/>
            <person name="Johnson-Hopson C."/>
            <person name="Hsuan V.W."/>
            <person name="Iida K."/>
            <person name="Karnes M."/>
            <person name="Khan S."/>
            <person name="Koesema E."/>
            <person name="Ishida J."/>
            <person name="Jiang P.X."/>
            <person name="Jones T."/>
            <person name="Kawai J."/>
            <person name="Kamiya A."/>
            <person name="Meyers C."/>
            <person name="Nakajima M."/>
            <person name="Narusaka M."/>
            <person name="Seki M."/>
            <person name="Sakurai T."/>
            <person name="Satou M."/>
            <person name="Tamse R."/>
            <person name="Vaysberg M."/>
            <person name="Wallender E.K."/>
            <person name="Wong C."/>
            <person name="Yamamura Y."/>
            <person name="Yuan S."/>
            <person name="Shinozaki K."/>
            <person name="Davis R.W."/>
            <person name="Theologis A."/>
            <person name="Ecker J.R."/>
        </authorList>
    </citation>
    <scope>NUCLEOTIDE SEQUENCE [LARGE SCALE MRNA]</scope>
    <source>
        <strain>cv. Columbia</strain>
    </source>
</reference>
<reference key="4">
    <citation type="journal article" date="2004" name="Plant Cell">
        <title>Genome-wide analysis of Arabidopsis pentatricopeptide repeat proteins reveals their essential role in organelle biogenesis.</title>
        <authorList>
            <person name="Lurin C."/>
            <person name="Andres C."/>
            <person name="Aubourg S."/>
            <person name="Bellaoui M."/>
            <person name="Bitton F."/>
            <person name="Bruyere C."/>
            <person name="Caboche M."/>
            <person name="Debast C."/>
            <person name="Gualberto J."/>
            <person name="Hoffmann B."/>
            <person name="Lecharny A."/>
            <person name="Le Ret M."/>
            <person name="Martin-Magniette M.-L."/>
            <person name="Mireau H."/>
            <person name="Peeters N."/>
            <person name="Renou J.-P."/>
            <person name="Szurek B."/>
            <person name="Taconnat L."/>
            <person name="Small I."/>
        </authorList>
    </citation>
    <scope>GENE FAMILY</scope>
</reference>
<evidence type="ECO:0000255" key="1"/>
<evidence type="ECO:0000305" key="2"/>
<dbReference type="EMBL" id="AC064879">
    <property type="protein sequence ID" value="AAG00888.1"/>
    <property type="molecule type" value="Genomic_DNA"/>
</dbReference>
<dbReference type="EMBL" id="CP002684">
    <property type="protein sequence ID" value="AEE27421.1"/>
    <property type="molecule type" value="Genomic_DNA"/>
</dbReference>
<dbReference type="EMBL" id="AY065448">
    <property type="protein sequence ID" value="AAL38889.1"/>
    <property type="molecule type" value="mRNA"/>
</dbReference>
<dbReference type="PIR" id="A86154">
    <property type="entry name" value="A86154"/>
</dbReference>
<dbReference type="RefSeq" id="NP_171739.1">
    <property type="nucleotide sequence ID" value="NM_100118.5"/>
</dbReference>
<dbReference type="SMR" id="Q9FZ24"/>
<dbReference type="FunCoup" id="Q9FZ24">
    <property type="interactions" value="640"/>
</dbReference>
<dbReference type="STRING" id="3702.Q9FZ24"/>
<dbReference type="SwissPalm" id="Q9FZ24"/>
<dbReference type="PaxDb" id="3702-AT1G02370.1"/>
<dbReference type="ProteomicsDB" id="226492"/>
<dbReference type="EnsemblPlants" id="AT1G02370.1">
    <property type="protein sequence ID" value="AT1G02370.1"/>
    <property type="gene ID" value="AT1G02370"/>
</dbReference>
<dbReference type="GeneID" id="837735"/>
<dbReference type="Gramene" id="AT1G02370.1">
    <property type="protein sequence ID" value="AT1G02370.1"/>
    <property type="gene ID" value="AT1G02370"/>
</dbReference>
<dbReference type="KEGG" id="ath:AT1G02370"/>
<dbReference type="Araport" id="AT1G02370"/>
<dbReference type="TAIR" id="AT1G02370"/>
<dbReference type="eggNOG" id="KOG4197">
    <property type="taxonomic scope" value="Eukaryota"/>
</dbReference>
<dbReference type="HOGENOM" id="CLU_019802_3_0_1"/>
<dbReference type="InParanoid" id="Q9FZ24"/>
<dbReference type="OMA" id="LFLEHYM"/>
<dbReference type="PhylomeDB" id="Q9FZ24"/>
<dbReference type="PRO" id="PR:Q9FZ24"/>
<dbReference type="Proteomes" id="UP000006548">
    <property type="component" value="Chromosome 1"/>
</dbReference>
<dbReference type="ExpressionAtlas" id="Q9FZ24">
    <property type="expression patterns" value="baseline and differential"/>
</dbReference>
<dbReference type="GO" id="GO:0005739">
    <property type="term" value="C:mitochondrion"/>
    <property type="evidence" value="ECO:0007669"/>
    <property type="project" value="UniProtKB-SubCell"/>
</dbReference>
<dbReference type="GO" id="GO:0003729">
    <property type="term" value="F:mRNA binding"/>
    <property type="evidence" value="ECO:0007669"/>
    <property type="project" value="UniProtKB-ARBA"/>
</dbReference>
<dbReference type="FunFam" id="1.25.40.10:FF:000385">
    <property type="entry name" value="Pentatricopeptide repeat-containing protein mitochondrial"/>
    <property type="match status" value="1"/>
</dbReference>
<dbReference type="FunFam" id="1.25.40.10:FF:000618">
    <property type="entry name" value="Pentatricopeptide repeat-containing protein mitochondrial"/>
    <property type="match status" value="1"/>
</dbReference>
<dbReference type="Gene3D" id="1.25.40.10">
    <property type="entry name" value="Tetratricopeptide repeat domain"/>
    <property type="match status" value="2"/>
</dbReference>
<dbReference type="InterPro" id="IPR002885">
    <property type="entry name" value="Pentatricopeptide_rpt"/>
</dbReference>
<dbReference type="InterPro" id="IPR011990">
    <property type="entry name" value="TPR-like_helical_dom_sf"/>
</dbReference>
<dbReference type="PANTHER" id="PTHR45717:SF8">
    <property type="entry name" value="OS01G0301000 PROTEIN"/>
    <property type="match status" value="1"/>
</dbReference>
<dbReference type="PANTHER" id="PTHR45717">
    <property type="entry name" value="OS12G0527900 PROTEIN"/>
    <property type="match status" value="1"/>
</dbReference>
<dbReference type="Pfam" id="PF01535">
    <property type="entry name" value="PPR"/>
    <property type="match status" value="5"/>
</dbReference>
<dbReference type="SUPFAM" id="SSF48452">
    <property type="entry name" value="TPR-like"/>
    <property type="match status" value="1"/>
</dbReference>
<dbReference type="PROSITE" id="PS51375">
    <property type="entry name" value="PPR"/>
    <property type="match status" value="7"/>
</dbReference>
<proteinExistence type="evidence at transcript level"/>
<protein>
    <recommendedName>
        <fullName>Pentatricopeptide repeat-containing protein At1g02370, mitochondrial</fullName>
    </recommendedName>
</protein>
<name>PPR4_ARATH</name>
<organism>
    <name type="scientific">Arabidopsis thaliana</name>
    <name type="common">Mouse-ear cress</name>
    <dbReference type="NCBI Taxonomy" id="3702"/>
    <lineage>
        <taxon>Eukaryota</taxon>
        <taxon>Viridiplantae</taxon>
        <taxon>Streptophyta</taxon>
        <taxon>Embryophyta</taxon>
        <taxon>Tracheophyta</taxon>
        <taxon>Spermatophyta</taxon>
        <taxon>Magnoliopsida</taxon>
        <taxon>eudicotyledons</taxon>
        <taxon>Gunneridae</taxon>
        <taxon>Pentapetalae</taxon>
        <taxon>rosids</taxon>
        <taxon>malvids</taxon>
        <taxon>Brassicales</taxon>
        <taxon>Brassicaceae</taxon>
        <taxon>Camelineae</taxon>
        <taxon>Arabidopsis</taxon>
    </lineage>
</organism>
<gene>
    <name type="ordered locus">At1g02370</name>
    <name type="ORF">T6A9.6</name>
</gene>
<sequence length="537" mass="60353">MNFRNLIASGSRLGKRFCATVFAPASATGIVEASVSSPAAANVVEASVSSPAAENGVRTSVAAPTVASRQRELYKKLSMLSVTGGTVAETLNQFIMEGITVRKDDLFRCAKTLRKFRRPQHAFEIFDWMEKRKMTFSVSDHAICLDLIGKTKGLEAAENYFNNLDPSAKNHQSTYGALMNCYCVELEEEKAKAHFEIMDELNFVNNSLPFNNMMSMYMRLSQPEKVPVLVDAMKQRGISPCGVTYSIWMQSCGSLNDLDGLEKIIDEMGKDSEAKTTWNTFSNLAAIYTKAGLYEKADSALKSMEEKMNPNNRDSHHFLMSLYAGISKGPEVYRVWESLKKARPEVNNLSYLVMLQAMSKLGDLDGIKKIFTEWESKCWAYDMRLANIAINTYLKGNMYEEAEKILDGAMKKSKGPFSKARQLLMIHLLENDKADLAMKHLEAAVSDSAENKDEWGWSSELVSLFFLHFEKAKDVDGAEDFCKILSNWKPLDSETMTFLIKTYAAAEKTSPDMRERLSQQQIEVSEEIQDLLKTVCP</sequence>